<keyword id="KW-1185">Reference proteome</keyword>
<dbReference type="EMBL" id="M19058">
    <property type="protein sequence ID" value="AAA88230.1"/>
    <property type="molecule type" value="Genomic_DNA"/>
</dbReference>
<dbReference type="EMBL" id="AL583923">
    <property type="protein sequence ID" value="CAC30749.1"/>
    <property type="molecule type" value="Genomic_DNA"/>
</dbReference>
<dbReference type="PIR" id="B27586">
    <property type="entry name" value="B27586"/>
</dbReference>
<dbReference type="RefSeq" id="NP_302219.1">
    <property type="nucleotide sequence ID" value="NC_002677.1"/>
</dbReference>
<dbReference type="RefSeq" id="WP_010908540.1">
    <property type="nucleotide sequence ID" value="NC_002677.1"/>
</dbReference>
<dbReference type="SMR" id="P13733"/>
<dbReference type="STRING" id="272631.gene:17575643"/>
<dbReference type="KEGG" id="mle:ML1796"/>
<dbReference type="PATRIC" id="fig|272631.5.peg.3419"/>
<dbReference type="Leproma" id="ML1796"/>
<dbReference type="eggNOG" id="COG3707">
    <property type="taxonomic scope" value="Bacteria"/>
</dbReference>
<dbReference type="HOGENOM" id="CLU_1862968_0_0_11"/>
<dbReference type="OrthoDB" id="3787288at2"/>
<dbReference type="Proteomes" id="UP000000806">
    <property type="component" value="Chromosome"/>
</dbReference>
<protein>
    <recommendedName>
        <fullName>Uncharacterized protein ML1796</fullName>
    </recommendedName>
</protein>
<gene>
    <name type="ordered locus">ML1796</name>
</gene>
<name>Y1796_MYCLE</name>
<proteinExistence type="predicted"/>
<reference key="1">
    <citation type="journal article" date="1988" name="J. Immunol.">
        <title>Antigenic proteins of Mycobacterium leprae. Complete sequence of the gene for the 18-kDa protein.</title>
        <authorList>
            <person name="Booth R.J."/>
            <person name="Harris D.P."/>
            <person name="Love J.M."/>
            <person name="Watson J.D."/>
        </authorList>
    </citation>
    <scope>NUCLEOTIDE SEQUENCE [GENOMIC DNA]</scope>
</reference>
<reference key="2">
    <citation type="journal article" date="2001" name="Nature">
        <title>Massive gene decay in the leprosy bacillus.</title>
        <authorList>
            <person name="Cole S.T."/>
            <person name="Eiglmeier K."/>
            <person name="Parkhill J."/>
            <person name="James K.D."/>
            <person name="Thomson N.R."/>
            <person name="Wheeler P.R."/>
            <person name="Honore N."/>
            <person name="Garnier T."/>
            <person name="Churcher C.M."/>
            <person name="Harris D.E."/>
            <person name="Mungall K.L."/>
            <person name="Basham D."/>
            <person name="Brown D."/>
            <person name="Chillingworth T."/>
            <person name="Connor R."/>
            <person name="Davies R.M."/>
            <person name="Devlin K."/>
            <person name="Duthoy S."/>
            <person name="Feltwell T."/>
            <person name="Fraser A."/>
            <person name="Hamlin N."/>
            <person name="Holroyd S."/>
            <person name="Hornsby T."/>
            <person name="Jagels K."/>
            <person name="Lacroix C."/>
            <person name="Maclean J."/>
            <person name="Moule S."/>
            <person name="Murphy L.D."/>
            <person name="Oliver K."/>
            <person name="Quail M.A."/>
            <person name="Rajandream M.A."/>
            <person name="Rutherford K.M."/>
            <person name="Rutter S."/>
            <person name="Seeger K."/>
            <person name="Simon S."/>
            <person name="Simmonds M."/>
            <person name="Skelton J."/>
            <person name="Squares R."/>
            <person name="Squares S."/>
            <person name="Stevens K."/>
            <person name="Taylor K."/>
            <person name="Whitehead S."/>
            <person name="Woodward J.R."/>
            <person name="Barrell B.G."/>
        </authorList>
    </citation>
    <scope>NUCLEOTIDE SEQUENCE [LARGE SCALE GENOMIC DNA]</scope>
    <source>
        <strain>TN</strain>
    </source>
</reference>
<organism>
    <name type="scientific">Mycobacterium leprae (strain TN)</name>
    <dbReference type="NCBI Taxonomy" id="272631"/>
    <lineage>
        <taxon>Bacteria</taxon>
        <taxon>Bacillati</taxon>
        <taxon>Actinomycetota</taxon>
        <taxon>Actinomycetes</taxon>
        <taxon>Mycobacteriales</taxon>
        <taxon>Mycobacteriaceae</taxon>
        <taxon>Mycobacterium</taxon>
    </lineage>
</organism>
<accession>P13733</accession>
<sequence>MSSLTTDLMLTHRHLNDRGQVAATIDEILNTHKLFSTRHRIIDTSENVDNVIVIADQLFDDRGATIGTYDFYIDVSALPEQVHEGIVIARLAKSTQNRAGIEQTKSMLMLIDGITYDTPFNLLKYAVPGNQHQAAAG</sequence>
<feature type="chain" id="PRO_0000104154" description="Uncharacterized protein ML1796">
    <location>
        <begin position="1"/>
        <end position="137"/>
    </location>
</feature>